<protein>
    <recommendedName>
        <fullName>Delta(14)-sterol reductase</fullName>
        <ecNumber evidence="7 8">1.3.1.70</ecNumber>
    </recommendedName>
    <alternativeName>
        <fullName>C-14 sterol reductase</fullName>
    </alternativeName>
    <alternativeName>
        <fullName evidence="5">Protein FACKEL</fullName>
    </alternativeName>
    <alternativeName>
        <fullName>Sterol C14-reductase</fullName>
    </alternativeName>
</protein>
<accession>Q9LDR4</accession>
<accession>Q9LD62</accession>
<comment type="function">
    <text evidence="3 4">Reduces the C14=C15 double bond of 4,4-dimethyl-cholesta-8,14,24-trienol to produce 4,4-dimethyl-cholesta-8,24-dienol. Required for cell division and expansion and is involved in proper organization of the embryo.</text>
</comment>
<comment type="catalytic activity">
    <reaction evidence="7 8">
        <text>4,4-dimethyl-5alpha-cholesta-8,24-dien-3beta-ol + NADP(+) = 4,4-dimethyl-5alpha-cholesta-8,14,24-trien-3beta-ol + NADPH + H(+)</text>
        <dbReference type="Rhea" id="RHEA:18561"/>
        <dbReference type="ChEBI" id="CHEBI:15378"/>
        <dbReference type="ChEBI" id="CHEBI:17813"/>
        <dbReference type="ChEBI" id="CHEBI:18364"/>
        <dbReference type="ChEBI" id="CHEBI:57783"/>
        <dbReference type="ChEBI" id="CHEBI:58349"/>
        <dbReference type="EC" id="1.3.1.70"/>
    </reaction>
    <physiologicalReaction direction="right-to-left" evidence="8">
        <dbReference type="Rhea" id="RHEA:18563"/>
    </physiologicalReaction>
</comment>
<comment type="pathway">
    <text>Steroid biosynthesis; zymosterol biosynthesis; zymosterol from lanosterol: step 2/6.</text>
</comment>
<comment type="subcellular location">
    <subcellularLocation>
        <location evidence="6">Membrane</location>
        <topology evidence="6">Multi-pass membrane protein</topology>
    </subcellularLocation>
</comment>
<comment type="alternative products">
    <event type="alternative splicing"/>
    <isoform>
        <id>Q9LDR4-1</id>
        <name>1</name>
        <sequence type="displayed"/>
    </isoform>
    <text>A number of isoforms are produced. According to EST sequences.</text>
</comment>
<comment type="similarity">
    <text evidence="6">Belongs to the ERG4/ERG24 family.</text>
</comment>
<comment type="sequence caution" evidence="6">
    <conflict type="erroneous initiation">
        <sequence resource="EMBL-CDS" id="AAF81279"/>
    </conflict>
</comment>
<comment type="sequence caution" evidence="6">
    <conflict type="erroneous initiation">
        <sequence resource="EMBL-CDS" id="CAC01296"/>
    </conflict>
</comment>
<keyword id="KW-0025">Alternative splicing</keyword>
<keyword id="KW-0444">Lipid biosynthesis</keyword>
<keyword id="KW-0443">Lipid metabolism</keyword>
<keyword id="KW-0472">Membrane</keyword>
<keyword id="KW-0521">NADP</keyword>
<keyword id="KW-0560">Oxidoreductase</keyword>
<keyword id="KW-1185">Reference proteome</keyword>
<keyword id="KW-0752">Steroid biosynthesis</keyword>
<keyword id="KW-0753">Steroid metabolism</keyword>
<keyword id="KW-0756">Sterol biosynthesis</keyword>
<keyword id="KW-1207">Sterol metabolism</keyword>
<keyword id="KW-0812">Transmembrane</keyword>
<keyword id="KW-1133">Transmembrane helix</keyword>
<sequence>MLLDMDLGVLLPSLQSVYVLVFYFVYLAVAGEILPGKVIRGVLLSDGSQLRYRCNGLLALILLVAILGICAKLGIVSPLVVADRGLELLSATFIFCVLVTLALYVTGRSSSNKGSSLKPHVSGNLVHDWWFGIQLNPQFMSIDLKFFFVRAGMMGWLLINLSILAKSVQDGSLSQSMILYQIFCALYILDYFVHEEYMTSTWDIIAERLGFMLVFGDLLWIPFTFSIQGWWLLHNKVELTVPAIVVNCLVFLIGYMVFRGANKQKHIFKKNPKTPIWGKPPVVVGGKLLVSGYWGIARHCNYLGDLMLALSFSLPCGISSPVPYFYPIYLLILLIWRERRDEVRCAEKYKEIWAEYLRLVPWRILPYVY</sequence>
<organism>
    <name type="scientific">Arabidopsis thaliana</name>
    <name type="common">Mouse-ear cress</name>
    <dbReference type="NCBI Taxonomy" id="3702"/>
    <lineage>
        <taxon>Eukaryota</taxon>
        <taxon>Viridiplantae</taxon>
        <taxon>Streptophyta</taxon>
        <taxon>Embryophyta</taxon>
        <taxon>Tracheophyta</taxon>
        <taxon>Spermatophyta</taxon>
        <taxon>Magnoliopsida</taxon>
        <taxon>eudicotyledons</taxon>
        <taxon>Gunneridae</taxon>
        <taxon>Pentapetalae</taxon>
        <taxon>rosids</taxon>
        <taxon>malvids</taxon>
        <taxon>Brassicales</taxon>
        <taxon>Brassicaceae</taxon>
        <taxon>Camelineae</taxon>
        <taxon>Arabidopsis</taxon>
    </lineage>
</organism>
<feature type="chain" id="PRO_0000207499" description="Delta(14)-sterol reductase">
    <location>
        <begin position="1"/>
        <end position="369"/>
    </location>
</feature>
<feature type="transmembrane region" description="Helical" evidence="2">
    <location>
        <begin position="15"/>
        <end position="34"/>
    </location>
</feature>
<feature type="transmembrane region" description="Helical" evidence="2">
    <location>
        <begin position="54"/>
        <end position="76"/>
    </location>
</feature>
<feature type="transmembrane region" description="Helical" evidence="2">
    <location>
        <begin position="86"/>
        <end position="105"/>
    </location>
</feature>
<feature type="transmembrane region" description="Helical" evidence="2">
    <location>
        <begin position="146"/>
        <end position="168"/>
    </location>
</feature>
<feature type="transmembrane region" description="Helical" evidence="2">
    <location>
        <begin position="178"/>
        <end position="195"/>
    </location>
</feature>
<feature type="transmembrane region" description="Helical" evidence="2">
    <location>
        <begin position="208"/>
        <end position="230"/>
    </location>
</feature>
<feature type="transmembrane region" description="Helical" evidence="2">
    <location>
        <begin position="240"/>
        <end position="262"/>
    </location>
</feature>
<feature type="transmembrane region" description="Helical" evidence="2">
    <location>
        <begin position="275"/>
        <end position="297"/>
    </location>
</feature>
<feature type="transmembrane region" description="Helical" evidence="2">
    <location>
        <begin position="317"/>
        <end position="336"/>
    </location>
</feature>
<feature type="binding site" evidence="1">
    <location>
        <position position="265"/>
    </location>
    <ligand>
        <name>NADP(+)</name>
        <dbReference type="ChEBI" id="CHEBI:58349"/>
    </ligand>
</feature>
<feature type="binding site" evidence="1">
    <location>
        <position position="269"/>
    </location>
    <ligand>
        <name>NADP(+)</name>
        <dbReference type="ChEBI" id="CHEBI:58349"/>
    </ligand>
</feature>
<feature type="binding site" evidence="1">
    <location>
        <position position="289"/>
    </location>
    <ligand>
        <name>NADP(+)</name>
        <dbReference type="ChEBI" id="CHEBI:58349"/>
    </ligand>
</feature>
<feature type="binding site" evidence="1">
    <location>
        <position position="294"/>
    </location>
    <ligand>
        <name>NADP(+)</name>
        <dbReference type="ChEBI" id="CHEBI:58349"/>
    </ligand>
</feature>
<feature type="binding site" evidence="1">
    <location>
        <begin position="301"/>
        <end position="302"/>
    </location>
    <ligand>
        <name>NADP(+)</name>
        <dbReference type="ChEBI" id="CHEBI:58349"/>
    </ligand>
</feature>
<feature type="binding site" evidence="1">
    <location>
        <position position="341"/>
    </location>
    <ligand>
        <name>NADP(+)</name>
        <dbReference type="ChEBI" id="CHEBI:58349"/>
    </ligand>
</feature>
<feature type="binding site" evidence="1">
    <location>
        <begin position="345"/>
        <end position="349"/>
    </location>
    <ligand>
        <name>NADP(+)</name>
        <dbReference type="ChEBI" id="CHEBI:58349"/>
    </ligand>
</feature>
<feature type="binding site" evidence="1">
    <location>
        <position position="356"/>
    </location>
    <ligand>
        <name>NADP(+)</name>
        <dbReference type="ChEBI" id="CHEBI:58349"/>
    </ligand>
</feature>
<name>ERG24_ARATH</name>
<reference key="1">
    <citation type="journal article" date="2000" name="Genes Dev.">
        <title>FACKEL is a sterol C-14 reductase required for organized cell division and expansion in Arabidopsis embryogenesis.</title>
        <authorList>
            <person name="Schrick K."/>
            <person name="Mayer U."/>
            <person name="Horrichs A."/>
            <person name="Kuhnt C."/>
            <person name="Bellini C."/>
            <person name="Dangl J."/>
            <person name="Schmidt J."/>
            <person name="Juergens G."/>
        </authorList>
    </citation>
    <scope>NUCLEOTIDE SEQUENCE [MRNA]</scope>
    <scope>FUNCTION</scope>
    <scope>CATALYTIC ACTIVITY</scope>
</reference>
<reference key="2">
    <citation type="journal article" date="2000" name="Genes Dev.">
        <title>A critical role of sterols in embryonic patterning and meristem programming revealed by the fackel mutants of Arabidopsis thaliana.</title>
        <authorList>
            <person name="Jang J.-C."/>
            <person name="Fujioka S."/>
            <person name="Tasaka M."/>
            <person name="Seto H."/>
            <person name="Takatsuto S."/>
            <person name="Ishii A."/>
            <person name="Aida M."/>
            <person name="Yoshida S."/>
            <person name="Sheen J."/>
        </authorList>
    </citation>
    <scope>NUCLEOTIDE SEQUENCE</scope>
    <scope>FUNCTION</scope>
    <scope>CATALYTIC ACTIVITY</scope>
</reference>
<reference key="3">
    <citation type="journal article" date="2000" name="Nature">
        <title>Sequence and analysis of chromosome 3 of the plant Arabidopsis thaliana.</title>
        <authorList>
            <person name="Salanoubat M."/>
            <person name="Lemcke K."/>
            <person name="Rieger M."/>
            <person name="Ansorge W."/>
            <person name="Unseld M."/>
            <person name="Fartmann B."/>
            <person name="Valle G."/>
            <person name="Bloecker H."/>
            <person name="Perez-Alonso M."/>
            <person name="Obermaier B."/>
            <person name="Delseny M."/>
            <person name="Boutry M."/>
            <person name="Grivell L.A."/>
            <person name="Mache R."/>
            <person name="Puigdomenech P."/>
            <person name="De Simone V."/>
            <person name="Choisne N."/>
            <person name="Artiguenave F."/>
            <person name="Robert C."/>
            <person name="Brottier P."/>
            <person name="Wincker P."/>
            <person name="Cattolico L."/>
            <person name="Weissenbach J."/>
            <person name="Saurin W."/>
            <person name="Quetier F."/>
            <person name="Schaefer M."/>
            <person name="Mueller-Auer S."/>
            <person name="Gabel C."/>
            <person name="Fuchs M."/>
            <person name="Benes V."/>
            <person name="Wurmbach E."/>
            <person name="Drzonek H."/>
            <person name="Erfle H."/>
            <person name="Jordan N."/>
            <person name="Bangert S."/>
            <person name="Wiedelmann R."/>
            <person name="Kranz H."/>
            <person name="Voss H."/>
            <person name="Holland R."/>
            <person name="Brandt P."/>
            <person name="Nyakatura G."/>
            <person name="Vezzi A."/>
            <person name="D'Angelo M."/>
            <person name="Pallavicini A."/>
            <person name="Toppo S."/>
            <person name="Simionati B."/>
            <person name="Conrad A."/>
            <person name="Hornischer K."/>
            <person name="Kauer G."/>
            <person name="Loehnert T.-H."/>
            <person name="Nordsiek G."/>
            <person name="Reichelt J."/>
            <person name="Scharfe M."/>
            <person name="Schoen O."/>
            <person name="Bargues M."/>
            <person name="Terol J."/>
            <person name="Climent J."/>
            <person name="Navarro P."/>
            <person name="Collado C."/>
            <person name="Perez-Perez A."/>
            <person name="Ottenwaelder B."/>
            <person name="Duchemin D."/>
            <person name="Cooke R."/>
            <person name="Laudie M."/>
            <person name="Berger-Llauro C."/>
            <person name="Purnelle B."/>
            <person name="Masuy D."/>
            <person name="de Haan M."/>
            <person name="Maarse A.C."/>
            <person name="Alcaraz J.-P."/>
            <person name="Cottet A."/>
            <person name="Casacuberta E."/>
            <person name="Monfort A."/>
            <person name="Argiriou A."/>
            <person name="Flores M."/>
            <person name="Liguori R."/>
            <person name="Vitale D."/>
            <person name="Mannhaupt G."/>
            <person name="Haase D."/>
            <person name="Schoof H."/>
            <person name="Rudd S."/>
            <person name="Zaccaria P."/>
            <person name="Mewes H.-W."/>
            <person name="Mayer K.F.X."/>
            <person name="Kaul S."/>
            <person name="Town C.D."/>
            <person name="Koo H.L."/>
            <person name="Tallon L.J."/>
            <person name="Jenkins J."/>
            <person name="Rooney T."/>
            <person name="Rizzo M."/>
            <person name="Walts A."/>
            <person name="Utterback T."/>
            <person name="Fujii C.Y."/>
            <person name="Shea T.P."/>
            <person name="Creasy T.H."/>
            <person name="Haas B."/>
            <person name="Maiti R."/>
            <person name="Wu D."/>
            <person name="Peterson J."/>
            <person name="Van Aken S."/>
            <person name="Pai G."/>
            <person name="Militscher J."/>
            <person name="Sellers P."/>
            <person name="Gill J.E."/>
            <person name="Feldblyum T.V."/>
            <person name="Preuss D."/>
            <person name="Lin X."/>
            <person name="Nierman W.C."/>
            <person name="Salzberg S.L."/>
            <person name="White O."/>
            <person name="Venter J.C."/>
            <person name="Fraser C.M."/>
            <person name="Kaneko T."/>
            <person name="Nakamura Y."/>
            <person name="Sato S."/>
            <person name="Kato T."/>
            <person name="Asamizu E."/>
            <person name="Sasamoto S."/>
            <person name="Kimura T."/>
            <person name="Idesawa K."/>
            <person name="Kawashima K."/>
            <person name="Kishida Y."/>
            <person name="Kiyokawa C."/>
            <person name="Kohara M."/>
            <person name="Matsumoto M."/>
            <person name="Matsuno A."/>
            <person name="Muraki A."/>
            <person name="Nakayama S."/>
            <person name="Nakazaki N."/>
            <person name="Shinpo S."/>
            <person name="Takeuchi C."/>
            <person name="Wada T."/>
            <person name="Watanabe A."/>
            <person name="Yamada M."/>
            <person name="Yasuda M."/>
            <person name="Tabata S."/>
        </authorList>
    </citation>
    <scope>NUCLEOTIDE SEQUENCE [LARGE SCALE GENOMIC DNA]</scope>
    <source>
        <strain>cv. Columbia</strain>
    </source>
</reference>
<reference key="4">
    <citation type="journal article" date="2017" name="Plant J.">
        <title>Araport11: a complete reannotation of the Arabidopsis thaliana reference genome.</title>
        <authorList>
            <person name="Cheng C.Y."/>
            <person name="Krishnakumar V."/>
            <person name="Chan A.P."/>
            <person name="Thibaud-Nissen F."/>
            <person name="Schobel S."/>
            <person name="Town C.D."/>
        </authorList>
    </citation>
    <scope>GENOME REANNOTATION</scope>
    <source>
        <strain>cv. Columbia</strain>
    </source>
</reference>
<reference key="5">
    <citation type="journal article" date="2003" name="Science">
        <title>Empirical analysis of transcriptional activity in the Arabidopsis genome.</title>
        <authorList>
            <person name="Yamada K."/>
            <person name="Lim J."/>
            <person name="Dale J.M."/>
            <person name="Chen H."/>
            <person name="Shinn P."/>
            <person name="Palm C.J."/>
            <person name="Southwick A.M."/>
            <person name="Wu H.C."/>
            <person name="Kim C.J."/>
            <person name="Nguyen M."/>
            <person name="Pham P.K."/>
            <person name="Cheuk R.F."/>
            <person name="Karlin-Newmann G."/>
            <person name="Liu S.X."/>
            <person name="Lam B."/>
            <person name="Sakano H."/>
            <person name="Wu T."/>
            <person name="Yu G."/>
            <person name="Miranda M."/>
            <person name="Quach H.L."/>
            <person name="Tripp M."/>
            <person name="Chang C.H."/>
            <person name="Lee J.M."/>
            <person name="Toriumi M.J."/>
            <person name="Chan M.M."/>
            <person name="Tang C.C."/>
            <person name="Onodera C.S."/>
            <person name="Deng J.M."/>
            <person name="Akiyama K."/>
            <person name="Ansari Y."/>
            <person name="Arakawa T."/>
            <person name="Banh J."/>
            <person name="Banno F."/>
            <person name="Bowser L."/>
            <person name="Brooks S.Y."/>
            <person name="Carninci P."/>
            <person name="Chao Q."/>
            <person name="Choy N."/>
            <person name="Enju A."/>
            <person name="Goldsmith A.D."/>
            <person name="Gurjal M."/>
            <person name="Hansen N.F."/>
            <person name="Hayashizaki Y."/>
            <person name="Johnson-Hopson C."/>
            <person name="Hsuan V.W."/>
            <person name="Iida K."/>
            <person name="Karnes M."/>
            <person name="Khan S."/>
            <person name="Koesema E."/>
            <person name="Ishida J."/>
            <person name="Jiang P.X."/>
            <person name="Jones T."/>
            <person name="Kawai J."/>
            <person name="Kamiya A."/>
            <person name="Meyers C."/>
            <person name="Nakajima M."/>
            <person name="Narusaka M."/>
            <person name="Seki M."/>
            <person name="Sakurai T."/>
            <person name="Satou M."/>
            <person name="Tamse R."/>
            <person name="Vaysberg M."/>
            <person name="Wallender E.K."/>
            <person name="Wong C."/>
            <person name="Yamamura Y."/>
            <person name="Yuan S."/>
            <person name="Shinozaki K."/>
            <person name="Davis R.W."/>
            <person name="Theologis A."/>
            <person name="Ecker J.R."/>
        </authorList>
    </citation>
    <scope>NUCLEOTIDE SEQUENCE [LARGE SCALE MRNA]</scope>
    <source>
        <strain>cv. Columbia</strain>
    </source>
</reference>
<gene>
    <name type="primary">FK</name>
    <name type="ordered locus">At3g52940</name>
    <name type="ORF">F8J2_111</name>
</gene>
<proteinExistence type="evidence at protein level"/>
<dbReference type="EC" id="1.3.1.70" evidence="7 8"/>
<dbReference type="EMBL" id="AF256535">
    <property type="protein sequence ID" value="AAF82282.1"/>
    <property type="molecule type" value="mRNA"/>
</dbReference>
<dbReference type="EMBL" id="AF256536">
    <property type="protein sequence ID" value="AAF82283.1"/>
    <property type="molecule type" value="Genomic_DNA"/>
</dbReference>
<dbReference type="EMBL" id="AF257178">
    <property type="protein sequence ID" value="AAF81279.1"/>
    <property type="status" value="ALT_INIT"/>
    <property type="molecule type" value="mRNA"/>
</dbReference>
<dbReference type="EMBL" id="AF263244">
    <property type="protein sequence ID" value="AAF82768.1"/>
    <property type="molecule type" value="Genomic_DNA"/>
</dbReference>
<dbReference type="EMBL" id="AL132969">
    <property type="protein sequence ID" value="CAC01296.1"/>
    <property type="status" value="ALT_INIT"/>
    <property type="molecule type" value="Genomic_DNA"/>
</dbReference>
<dbReference type="EMBL" id="CP002686">
    <property type="protein sequence ID" value="AEE79013.1"/>
    <property type="molecule type" value="Genomic_DNA"/>
</dbReference>
<dbReference type="EMBL" id="AY064964">
    <property type="protein sequence ID" value="AAL38381.1"/>
    <property type="molecule type" value="mRNA"/>
</dbReference>
<dbReference type="EMBL" id="AY133650">
    <property type="protein sequence ID" value="AAM91480.1"/>
    <property type="molecule type" value="mRNA"/>
</dbReference>
<dbReference type="RefSeq" id="NP_566975.1">
    <molecule id="Q9LDR4-1"/>
    <property type="nucleotide sequence ID" value="NM_115154.3"/>
</dbReference>
<dbReference type="SMR" id="Q9LDR4"/>
<dbReference type="FunCoup" id="Q9LDR4">
    <property type="interactions" value="2620"/>
</dbReference>
<dbReference type="STRING" id="3702.Q9LDR4"/>
<dbReference type="PaxDb" id="3702-AT3G52940.1"/>
<dbReference type="ProteomicsDB" id="220638">
    <molecule id="Q9LDR4-1"/>
</dbReference>
<dbReference type="EnsemblPlants" id="AT3G52940.1">
    <molecule id="Q9LDR4-1"/>
    <property type="protein sequence ID" value="AT3G52940.1"/>
    <property type="gene ID" value="AT3G52940"/>
</dbReference>
<dbReference type="GeneID" id="824460"/>
<dbReference type="Gramene" id="AT3G52940.1">
    <molecule id="Q9LDR4-1"/>
    <property type="protein sequence ID" value="AT3G52940.1"/>
    <property type="gene ID" value="AT3G52940"/>
</dbReference>
<dbReference type="KEGG" id="ath:AT3G52940"/>
<dbReference type="Araport" id="AT3G52940"/>
<dbReference type="TAIR" id="AT3G52940">
    <property type="gene designation" value="FK"/>
</dbReference>
<dbReference type="eggNOG" id="KOG1435">
    <property type="taxonomic scope" value="Eukaryota"/>
</dbReference>
<dbReference type="HOGENOM" id="CLU_015631_0_1_1"/>
<dbReference type="InParanoid" id="Q9LDR4"/>
<dbReference type="OMA" id="EWCELRP"/>
<dbReference type="OrthoDB" id="5326588at2759"/>
<dbReference type="PhylomeDB" id="Q9LDR4"/>
<dbReference type="BioCyc" id="ARA:AT3G52940-MONOMER"/>
<dbReference type="BioCyc" id="MetaCyc:AT3G52940-MONOMER"/>
<dbReference type="BRENDA" id="1.3.1.70">
    <property type="organism ID" value="399"/>
</dbReference>
<dbReference type="UniPathway" id="UPA00770">
    <property type="reaction ID" value="UER00755"/>
</dbReference>
<dbReference type="PRO" id="PR:Q9LDR4"/>
<dbReference type="Proteomes" id="UP000006548">
    <property type="component" value="Chromosome 3"/>
</dbReference>
<dbReference type="ExpressionAtlas" id="Q9LDR4">
    <property type="expression patterns" value="baseline and differential"/>
</dbReference>
<dbReference type="GO" id="GO:0016020">
    <property type="term" value="C:membrane"/>
    <property type="evidence" value="ECO:0007669"/>
    <property type="project" value="UniProtKB-SubCell"/>
</dbReference>
<dbReference type="GO" id="GO:0050613">
    <property type="term" value="F:Delta14-sterol reductase activity"/>
    <property type="evidence" value="ECO:0000315"/>
    <property type="project" value="TAIR"/>
</dbReference>
<dbReference type="GO" id="GO:0050661">
    <property type="term" value="F:NADP binding"/>
    <property type="evidence" value="ECO:0000250"/>
    <property type="project" value="UniProtKB"/>
</dbReference>
<dbReference type="GO" id="GO:0016126">
    <property type="term" value="P:sterol biosynthetic process"/>
    <property type="evidence" value="ECO:0007669"/>
    <property type="project" value="UniProtKB-KW"/>
</dbReference>
<dbReference type="FunFam" id="1.20.120.1630:FF:000011">
    <property type="entry name" value="Delta(14)-sterol reductase"/>
    <property type="match status" value="1"/>
</dbReference>
<dbReference type="Gene3D" id="1.20.120.1630">
    <property type="match status" value="1"/>
</dbReference>
<dbReference type="InterPro" id="IPR001171">
    <property type="entry name" value="ERG24_DHCR-like"/>
</dbReference>
<dbReference type="InterPro" id="IPR018083">
    <property type="entry name" value="Sterol_reductase_CS"/>
</dbReference>
<dbReference type="PANTHER" id="PTHR21257">
    <property type="entry name" value="DELTA(14)-STEROL REDUCTASE"/>
    <property type="match status" value="1"/>
</dbReference>
<dbReference type="PANTHER" id="PTHR21257:SF52">
    <property type="entry name" value="DELTA(14)-STEROL REDUCTASE TM7SF2"/>
    <property type="match status" value="1"/>
</dbReference>
<dbReference type="Pfam" id="PF01222">
    <property type="entry name" value="ERG4_ERG24"/>
    <property type="match status" value="1"/>
</dbReference>
<dbReference type="PROSITE" id="PS01017">
    <property type="entry name" value="STEROL_REDUCT_1"/>
    <property type="match status" value="1"/>
</dbReference>
<dbReference type="PROSITE" id="PS01018">
    <property type="entry name" value="STEROL_REDUCT_2"/>
    <property type="match status" value="1"/>
</dbReference>
<evidence type="ECO:0000250" key="1">
    <source>
        <dbReference type="UniProtKB" id="G4SW86"/>
    </source>
</evidence>
<evidence type="ECO:0000255" key="2"/>
<evidence type="ECO:0000269" key="3">
    <source>
    </source>
</evidence>
<evidence type="ECO:0000269" key="4">
    <source>
    </source>
</evidence>
<evidence type="ECO:0000303" key="5">
    <source>
    </source>
</evidence>
<evidence type="ECO:0000305" key="6"/>
<evidence type="ECO:0000305" key="7">
    <source>
    </source>
</evidence>
<evidence type="ECO:0000305" key="8">
    <source>
    </source>
</evidence>